<gene>
    <name evidence="1" type="primary">ruvC</name>
    <name type="ordered locus">SCO1520</name>
    <name type="ORF">SCL2.10c</name>
</gene>
<reference key="1">
    <citation type="journal article" date="2002" name="Nature">
        <title>Complete genome sequence of the model actinomycete Streptomyces coelicolor A3(2).</title>
        <authorList>
            <person name="Bentley S.D."/>
            <person name="Chater K.F."/>
            <person name="Cerdeno-Tarraga A.-M."/>
            <person name="Challis G.L."/>
            <person name="Thomson N.R."/>
            <person name="James K.D."/>
            <person name="Harris D.E."/>
            <person name="Quail M.A."/>
            <person name="Kieser H."/>
            <person name="Harper D."/>
            <person name="Bateman A."/>
            <person name="Brown S."/>
            <person name="Chandra G."/>
            <person name="Chen C.W."/>
            <person name="Collins M."/>
            <person name="Cronin A."/>
            <person name="Fraser A."/>
            <person name="Goble A."/>
            <person name="Hidalgo J."/>
            <person name="Hornsby T."/>
            <person name="Howarth S."/>
            <person name="Huang C.-H."/>
            <person name="Kieser T."/>
            <person name="Larke L."/>
            <person name="Murphy L.D."/>
            <person name="Oliver K."/>
            <person name="O'Neil S."/>
            <person name="Rabbinowitsch E."/>
            <person name="Rajandream M.A."/>
            <person name="Rutherford K.M."/>
            <person name="Rutter S."/>
            <person name="Seeger K."/>
            <person name="Saunders D."/>
            <person name="Sharp S."/>
            <person name="Squares R."/>
            <person name="Squares S."/>
            <person name="Taylor K."/>
            <person name="Warren T."/>
            <person name="Wietzorrek A."/>
            <person name="Woodward J.R."/>
            <person name="Barrell B.G."/>
            <person name="Parkhill J."/>
            <person name="Hopwood D.A."/>
        </authorList>
    </citation>
    <scope>NUCLEOTIDE SEQUENCE [LARGE SCALE GENOMIC DNA]</scope>
    <source>
        <strain>ATCC BAA-471 / A3(2) / M145</strain>
    </source>
</reference>
<dbReference type="EC" id="3.1.21.10" evidence="1"/>
<dbReference type="EMBL" id="AL939109">
    <property type="protein sequence ID" value="CAB70922.1"/>
    <property type="molecule type" value="Genomic_DNA"/>
</dbReference>
<dbReference type="RefSeq" id="NP_625799.1">
    <property type="nucleotide sequence ID" value="NC_003888.3"/>
</dbReference>
<dbReference type="SMR" id="Q9L289"/>
<dbReference type="FunCoup" id="Q9L289">
    <property type="interactions" value="46"/>
</dbReference>
<dbReference type="STRING" id="100226.gene:17759106"/>
<dbReference type="PaxDb" id="100226-SCO1520"/>
<dbReference type="KEGG" id="sco:SCO1520"/>
<dbReference type="PATRIC" id="fig|100226.15.peg.1529"/>
<dbReference type="eggNOG" id="COG0817">
    <property type="taxonomic scope" value="Bacteria"/>
</dbReference>
<dbReference type="HOGENOM" id="CLU_091257_0_2_11"/>
<dbReference type="InParanoid" id="Q9L289"/>
<dbReference type="OrthoDB" id="9805499at2"/>
<dbReference type="PhylomeDB" id="Q9L289"/>
<dbReference type="Proteomes" id="UP000001973">
    <property type="component" value="Chromosome"/>
</dbReference>
<dbReference type="GO" id="GO:0005737">
    <property type="term" value="C:cytoplasm"/>
    <property type="evidence" value="ECO:0007669"/>
    <property type="project" value="UniProtKB-SubCell"/>
</dbReference>
<dbReference type="GO" id="GO:0048476">
    <property type="term" value="C:Holliday junction resolvase complex"/>
    <property type="evidence" value="ECO:0007669"/>
    <property type="project" value="UniProtKB-UniRule"/>
</dbReference>
<dbReference type="GO" id="GO:0008821">
    <property type="term" value="F:crossover junction DNA endonuclease activity"/>
    <property type="evidence" value="ECO:0007669"/>
    <property type="project" value="UniProtKB-UniRule"/>
</dbReference>
<dbReference type="GO" id="GO:0003677">
    <property type="term" value="F:DNA binding"/>
    <property type="evidence" value="ECO:0007669"/>
    <property type="project" value="UniProtKB-KW"/>
</dbReference>
<dbReference type="GO" id="GO:0000287">
    <property type="term" value="F:magnesium ion binding"/>
    <property type="evidence" value="ECO:0007669"/>
    <property type="project" value="UniProtKB-UniRule"/>
</dbReference>
<dbReference type="GO" id="GO:0006310">
    <property type="term" value="P:DNA recombination"/>
    <property type="evidence" value="ECO:0007669"/>
    <property type="project" value="UniProtKB-UniRule"/>
</dbReference>
<dbReference type="GO" id="GO:0006281">
    <property type="term" value="P:DNA repair"/>
    <property type="evidence" value="ECO:0007669"/>
    <property type="project" value="UniProtKB-UniRule"/>
</dbReference>
<dbReference type="CDD" id="cd16962">
    <property type="entry name" value="RuvC"/>
    <property type="match status" value="1"/>
</dbReference>
<dbReference type="FunFam" id="3.30.420.10:FF:000002">
    <property type="entry name" value="Crossover junction endodeoxyribonuclease RuvC"/>
    <property type="match status" value="1"/>
</dbReference>
<dbReference type="Gene3D" id="3.30.420.10">
    <property type="entry name" value="Ribonuclease H-like superfamily/Ribonuclease H"/>
    <property type="match status" value="1"/>
</dbReference>
<dbReference type="HAMAP" id="MF_00034">
    <property type="entry name" value="RuvC"/>
    <property type="match status" value="1"/>
</dbReference>
<dbReference type="InterPro" id="IPR012337">
    <property type="entry name" value="RNaseH-like_sf"/>
</dbReference>
<dbReference type="InterPro" id="IPR036397">
    <property type="entry name" value="RNaseH_sf"/>
</dbReference>
<dbReference type="InterPro" id="IPR020563">
    <property type="entry name" value="X-over_junc_endoDNase_Mg_BS"/>
</dbReference>
<dbReference type="InterPro" id="IPR002176">
    <property type="entry name" value="X-over_junc_endoDNase_RuvC"/>
</dbReference>
<dbReference type="NCBIfam" id="TIGR00228">
    <property type="entry name" value="ruvC"/>
    <property type="match status" value="1"/>
</dbReference>
<dbReference type="PANTHER" id="PTHR30194">
    <property type="entry name" value="CROSSOVER JUNCTION ENDODEOXYRIBONUCLEASE RUVC"/>
    <property type="match status" value="1"/>
</dbReference>
<dbReference type="PANTHER" id="PTHR30194:SF3">
    <property type="entry name" value="CROSSOVER JUNCTION ENDODEOXYRIBONUCLEASE RUVC"/>
    <property type="match status" value="1"/>
</dbReference>
<dbReference type="Pfam" id="PF02075">
    <property type="entry name" value="RuvC"/>
    <property type="match status" value="1"/>
</dbReference>
<dbReference type="PRINTS" id="PR00696">
    <property type="entry name" value="RSOLVASERUVC"/>
</dbReference>
<dbReference type="SUPFAM" id="SSF53098">
    <property type="entry name" value="Ribonuclease H-like"/>
    <property type="match status" value="1"/>
</dbReference>
<dbReference type="PROSITE" id="PS01321">
    <property type="entry name" value="RUVC"/>
    <property type="match status" value="1"/>
</dbReference>
<feature type="chain" id="PRO_0000183135" description="Crossover junction endodeoxyribonuclease RuvC">
    <location>
        <begin position="1"/>
        <end position="188"/>
    </location>
</feature>
<feature type="active site" evidence="1">
    <location>
        <position position="7"/>
    </location>
</feature>
<feature type="active site" evidence="1">
    <location>
        <position position="68"/>
    </location>
</feature>
<feature type="active site" evidence="1">
    <location>
        <position position="141"/>
    </location>
</feature>
<feature type="binding site" evidence="1">
    <location>
        <position position="7"/>
    </location>
    <ligand>
        <name>Mg(2+)</name>
        <dbReference type="ChEBI" id="CHEBI:18420"/>
        <label>1</label>
    </ligand>
</feature>
<feature type="binding site" evidence="1">
    <location>
        <position position="68"/>
    </location>
    <ligand>
        <name>Mg(2+)</name>
        <dbReference type="ChEBI" id="CHEBI:18420"/>
        <label>2</label>
    </ligand>
</feature>
<feature type="binding site" evidence="1">
    <location>
        <position position="141"/>
    </location>
    <ligand>
        <name>Mg(2+)</name>
        <dbReference type="ChEBI" id="CHEBI:18420"/>
        <label>1</label>
    </ligand>
</feature>
<comment type="function">
    <text evidence="1">The RuvA-RuvB-RuvC complex processes Holliday junction (HJ) DNA during genetic recombination and DNA repair. Endonuclease that resolves HJ intermediates. Cleaves cruciform DNA by making single-stranded nicks across the HJ at symmetrical positions within the homologous arms, yielding a 5'-phosphate and a 3'-hydroxyl group; requires a central core of homology in the junction. The consensus cleavage sequence is 5'-(A/T)TT(C/G)-3'. Cleavage occurs on the 3'-side of the TT dinucleotide at the point of strand exchange. HJ branch migration catalyzed by RuvA-RuvB allows RuvC to scan DNA until it finds its consensus sequence, where it cleaves and resolves the cruciform DNA.</text>
</comment>
<comment type="catalytic activity">
    <reaction evidence="1">
        <text>Endonucleolytic cleavage at a junction such as a reciprocal single-stranded crossover between two homologous DNA duplexes (Holliday junction).</text>
        <dbReference type="EC" id="3.1.21.10"/>
    </reaction>
</comment>
<comment type="cofactor">
    <cofactor evidence="1">
        <name>Mg(2+)</name>
        <dbReference type="ChEBI" id="CHEBI:18420"/>
    </cofactor>
    <text evidence="1">Binds 2 Mg(2+) ion per subunit.</text>
</comment>
<comment type="subunit">
    <text evidence="1">Homodimer which binds Holliday junction (HJ) DNA. The HJ becomes 2-fold symmetrical on binding to RuvC with unstacked arms; it has a different conformation from HJ DNA in complex with RuvA. In the full resolvosome a probable DNA-RuvA(4)-RuvB(12)-RuvC(2) complex forms which resolves the HJ.</text>
</comment>
<comment type="subcellular location">
    <subcellularLocation>
        <location evidence="1">Cytoplasm</location>
    </subcellularLocation>
</comment>
<comment type="similarity">
    <text evidence="1 2">Belongs to the RuvC family.</text>
</comment>
<sequence>MRVLGVDPGLTRRGIGVVEGVAGRPLTMIGVGVVRTPADADLGHRLVAVEQGIEQWLDEHRPEFVAVERVFSQHNVRTVMGTAQASAVAILCASRRGIPVALHTPSEVKAAVTGSGRADKAQVGAMVTRLLRLAAPPKPADAADALALAICHIWRAPAQNRLQQAVALHTAQGPRRPHKLHPSKGRPA</sequence>
<proteinExistence type="inferred from homology"/>
<protein>
    <recommendedName>
        <fullName evidence="1">Crossover junction endodeoxyribonuclease RuvC</fullName>
        <ecNumber evidence="1">3.1.21.10</ecNumber>
    </recommendedName>
    <alternativeName>
        <fullName evidence="1">Holliday junction nuclease RuvC</fullName>
    </alternativeName>
    <alternativeName>
        <fullName evidence="1">Holliday junction resolvase RuvC</fullName>
    </alternativeName>
</protein>
<keyword id="KW-0963">Cytoplasm</keyword>
<keyword id="KW-0227">DNA damage</keyword>
<keyword id="KW-0233">DNA recombination</keyword>
<keyword id="KW-0234">DNA repair</keyword>
<keyword id="KW-0238">DNA-binding</keyword>
<keyword id="KW-0255">Endonuclease</keyword>
<keyword id="KW-0378">Hydrolase</keyword>
<keyword id="KW-0460">Magnesium</keyword>
<keyword id="KW-0479">Metal-binding</keyword>
<keyword id="KW-0540">Nuclease</keyword>
<keyword id="KW-1185">Reference proteome</keyword>
<name>RUVC_STRCO</name>
<evidence type="ECO:0000255" key="1">
    <source>
        <dbReference type="HAMAP-Rule" id="MF_00034"/>
    </source>
</evidence>
<evidence type="ECO:0000305" key="2"/>
<accession>Q9L289</accession>
<organism>
    <name type="scientific">Streptomyces coelicolor (strain ATCC BAA-471 / A3(2) / M145)</name>
    <dbReference type="NCBI Taxonomy" id="100226"/>
    <lineage>
        <taxon>Bacteria</taxon>
        <taxon>Bacillati</taxon>
        <taxon>Actinomycetota</taxon>
        <taxon>Actinomycetes</taxon>
        <taxon>Kitasatosporales</taxon>
        <taxon>Streptomycetaceae</taxon>
        <taxon>Streptomyces</taxon>
        <taxon>Streptomyces albidoflavus group</taxon>
    </lineage>
</organism>